<protein>
    <recommendedName>
        <fullName>Probable exopolygalacturonase C</fullName>
        <ecNumber>3.2.1.67</ecNumber>
    </recommendedName>
    <alternativeName>
        <fullName>Galacturan 1,4-alpha-galacturonidase C</fullName>
    </alternativeName>
    <alternativeName>
        <fullName>Poly(1,4-alpha-D-galacturonide)galacturonohydrolase C</fullName>
    </alternativeName>
</protein>
<name>PGXC_ASPFU</name>
<gene>
    <name type="primary">pgxC</name>
    <name type="ORF">AFUA_3G08680</name>
</gene>
<comment type="function">
    <text evidence="1">Specific in hydrolyzing the terminal glycosidic bond of polygalacturonic acid and oligogalacturonates.</text>
</comment>
<comment type="catalytic activity">
    <reaction>
        <text>[(1-&gt;4)-alpha-D-galacturonosyl](n) + H2O = alpha-D-galacturonate + [(1-&gt;4)-alpha-D-galacturonosyl](n-1)</text>
        <dbReference type="Rhea" id="RHEA:14117"/>
        <dbReference type="Rhea" id="RHEA-COMP:14570"/>
        <dbReference type="Rhea" id="RHEA-COMP:14572"/>
        <dbReference type="ChEBI" id="CHEBI:15377"/>
        <dbReference type="ChEBI" id="CHEBI:58658"/>
        <dbReference type="ChEBI" id="CHEBI:140523"/>
        <dbReference type="EC" id="3.2.1.67"/>
    </reaction>
</comment>
<comment type="subcellular location">
    <subcellularLocation>
        <location evidence="1">Secreted</location>
    </subcellularLocation>
</comment>
<comment type="similarity">
    <text evidence="3">Belongs to the glycosyl hydrolase 28 family.</text>
</comment>
<reference key="1">
    <citation type="journal article" date="2005" name="Nature">
        <title>Genomic sequence of the pathogenic and allergenic filamentous fungus Aspergillus fumigatus.</title>
        <authorList>
            <person name="Nierman W.C."/>
            <person name="Pain A."/>
            <person name="Anderson M.J."/>
            <person name="Wortman J.R."/>
            <person name="Kim H.S."/>
            <person name="Arroyo J."/>
            <person name="Berriman M."/>
            <person name="Abe K."/>
            <person name="Archer D.B."/>
            <person name="Bermejo C."/>
            <person name="Bennett J.W."/>
            <person name="Bowyer P."/>
            <person name="Chen D."/>
            <person name="Collins M."/>
            <person name="Coulsen R."/>
            <person name="Davies R."/>
            <person name="Dyer P.S."/>
            <person name="Farman M.L."/>
            <person name="Fedorova N."/>
            <person name="Fedorova N.D."/>
            <person name="Feldblyum T.V."/>
            <person name="Fischer R."/>
            <person name="Fosker N."/>
            <person name="Fraser A."/>
            <person name="Garcia J.L."/>
            <person name="Garcia M.J."/>
            <person name="Goble A."/>
            <person name="Goldman G.H."/>
            <person name="Gomi K."/>
            <person name="Griffith-Jones S."/>
            <person name="Gwilliam R."/>
            <person name="Haas B.J."/>
            <person name="Haas H."/>
            <person name="Harris D.E."/>
            <person name="Horiuchi H."/>
            <person name="Huang J."/>
            <person name="Humphray S."/>
            <person name="Jimenez J."/>
            <person name="Keller N."/>
            <person name="Khouri H."/>
            <person name="Kitamoto K."/>
            <person name="Kobayashi T."/>
            <person name="Konzack S."/>
            <person name="Kulkarni R."/>
            <person name="Kumagai T."/>
            <person name="Lafton A."/>
            <person name="Latge J.-P."/>
            <person name="Li W."/>
            <person name="Lord A."/>
            <person name="Lu C."/>
            <person name="Majoros W.H."/>
            <person name="May G.S."/>
            <person name="Miller B.L."/>
            <person name="Mohamoud Y."/>
            <person name="Molina M."/>
            <person name="Monod M."/>
            <person name="Mouyna I."/>
            <person name="Mulligan S."/>
            <person name="Murphy L.D."/>
            <person name="O'Neil S."/>
            <person name="Paulsen I."/>
            <person name="Penalva M.A."/>
            <person name="Pertea M."/>
            <person name="Price C."/>
            <person name="Pritchard B.L."/>
            <person name="Quail M.A."/>
            <person name="Rabbinowitsch E."/>
            <person name="Rawlins N."/>
            <person name="Rajandream M.A."/>
            <person name="Reichard U."/>
            <person name="Renauld H."/>
            <person name="Robson G.D."/>
            <person name="Rodriguez de Cordoba S."/>
            <person name="Rodriguez-Pena J.M."/>
            <person name="Ronning C.M."/>
            <person name="Rutter S."/>
            <person name="Salzberg S.L."/>
            <person name="Sanchez M."/>
            <person name="Sanchez-Ferrero J.C."/>
            <person name="Saunders D."/>
            <person name="Seeger K."/>
            <person name="Squares R."/>
            <person name="Squares S."/>
            <person name="Takeuchi M."/>
            <person name="Tekaia F."/>
            <person name="Turner G."/>
            <person name="Vazquez de Aldana C.R."/>
            <person name="Weidman J."/>
            <person name="White O."/>
            <person name="Woodward J.R."/>
            <person name="Yu J.-H."/>
            <person name="Fraser C.M."/>
            <person name="Galagan J.E."/>
            <person name="Asai K."/>
            <person name="Machida M."/>
            <person name="Hall N."/>
            <person name="Barrell B.G."/>
            <person name="Denning D.W."/>
        </authorList>
    </citation>
    <scope>NUCLEOTIDE SEQUENCE [LARGE SCALE GENOMIC DNA]</scope>
    <source>
        <strain>ATCC MYA-4609 / CBS 101355 / FGSC A1100 / Af293</strain>
    </source>
</reference>
<accession>Q4WX94</accession>
<keyword id="KW-0961">Cell wall biogenesis/degradation</keyword>
<keyword id="KW-1015">Disulfide bond</keyword>
<keyword id="KW-0325">Glycoprotein</keyword>
<keyword id="KW-0326">Glycosidase</keyword>
<keyword id="KW-0378">Hydrolase</keyword>
<keyword id="KW-1185">Reference proteome</keyword>
<keyword id="KW-0677">Repeat</keyword>
<keyword id="KW-0964">Secreted</keyword>
<keyword id="KW-0732">Signal</keyword>
<organism>
    <name type="scientific">Aspergillus fumigatus (strain ATCC MYA-4609 / CBS 101355 / FGSC A1100 / Af293)</name>
    <name type="common">Neosartorya fumigata</name>
    <dbReference type="NCBI Taxonomy" id="330879"/>
    <lineage>
        <taxon>Eukaryota</taxon>
        <taxon>Fungi</taxon>
        <taxon>Dikarya</taxon>
        <taxon>Ascomycota</taxon>
        <taxon>Pezizomycotina</taxon>
        <taxon>Eurotiomycetes</taxon>
        <taxon>Eurotiomycetidae</taxon>
        <taxon>Eurotiales</taxon>
        <taxon>Aspergillaceae</taxon>
        <taxon>Aspergillus</taxon>
        <taxon>Aspergillus subgen. Fumigati</taxon>
    </lineage>
</organism>
<sequence length="440" mass="48007">MLITNPALLGILASLVPLALGAPNQPIQARSRKCVIPSSYASSHGTADDSPAVASAFAQCAENSVIVFQEGVDYNIFHPIKATNLSNVEIRVLGNLHLPQDITAVQNIVKSGQSTWFTFQGPRVDWTGADDIKNGWINSYGQAWWDANPANSSSFPNRPHLMSYKTSQASIKNFRSRKPIAWNVKLQGDDITVSHAIVDATSTGGFPFNTDGFDVEGTNISITDSVMFNGDDAIAVNTPSHNIVFARNTIGYQSHGMSIGSLGKDPTDFANITNLRFEDVTVIDALYAARFKSWSGGRGLVKNVVWKNIRTFNVTFPIFVTQSYSDQSASRSGTIDPFSSVMMEDFTWSDFSGTINTYHPGDGSCVTDPCWYNVGLPNLKHTEAIVLECNTESSCKNFRTEGIRLHPQSKDSPSVICMKATAELNPKLGFECKNGTFVPH</sequence>
<dbReference type="EC" id="3.2.1.67"/>
<dbReference type="EMBL" id="AAHF01000002">
    <property type="protein sequence ID" value="EAL92709.1"/>
    <property type="molecule type" value="Genomic_DNA"/>
</dbReference>
<dbReference type="RefSeq" id="XP_754747.1">
    <property type="nucleotide sequence ID" value="XM_749654.1"/>
</dbReference>
<dbReference type="SMR" id="Q4WX94"/>
<dbReference type="STRING" id="330879.Q4WX94"/>
<dbReference type="GlyCosmos" id="Q4WX94">
    <property type="glycosylation" value="6 sites, No reported glycans"/>
</dbReference>
<dbReference type="EnsemblFungi" id="EAL92709">
    <property type="protein sequence ID" value="EAL92709"/>
    <property type="gene ID" value="AFUA_3G08680"/>
</dbReference>
<dbReference type="GeneID" id="3512150"/>
<dbReference type="KEGG" id="afm:AFUA_3G08680"/>
<dbReference type="VEuPathDB" id="FungiDB:Afu3g08680"/>
<dbReference type="eggNOG" id="ENOG502SI66">
    <property type="taxonomic scope" value="Eukaryota"/>
</dbReference>
<dbReference type="HOGENOM" id="CLU_016031_1_2_1"/>
<dbReference type="InParanoid" id="Q4WX94"/>
<dbReference type="OMA" id="RNSYCEG"/>
<dbReference type="OrthoDB" id="187139at2759"/>
<dbReference type="Proteomes" id="UP000002530">
    <property type="component" value="Chromosome 3"/>
</dbReference>
<dbReference type="GO" id="GO:0005576">
    <property type="term" value="C:extracellular region"/>
    <property type="evidence" value="ECO:0000250"/>
    <property type="project" value="UniProtKB"/>
</dbReference>
<dbReference type="GO" id="GO:0047911">
    <property type="term" value="F:galacturan 1,4-alpha-galacturonidase activity"/>
    <property type="evidence" value="ECO:0007669"/>
    <property type="project" value="UniProtKB-EC"/>
</dbReference>
<dbReference type="GO" id="GO:0004650">
    <property type="term" value="F:polygalacturonase activity"/>
    <property type="evidence" value="ECO:0000250"/>
    <property type="project" value="UniProtKB"/>
</dbReference>
<dbReference type="GO" id="GO:0071555">
    <property type="term" value="P:cell wall organization"/>
    <property type="evidence" value="ECO:0007669"/>
    <property type="project" value="UniProtKB-KW"/>
</dbReference>
<dbReference type="GO" id="GO:0045490">
    <property type="term" value="P:pectin catabolic process"/>
    <property type="evidence" value="ECO:0000250"/>
    <property type="project" value="UniProtKB"/>
</dbReference>
<dbReference type="FunFam" id="2.160.20.10:FF:000037">
    <property type="entry name" value="Probable exopolygalacturonase C"/>
    <property type="match status" value="1"/>
</dbReference>
<dbReference type="Gene3D" id="2.160.20.10">
    <property type="entry name" value="Single-stranded right-handed beta-helix, Pectin lyase-like"/>
    <property type="match status" value="1"/>
</dbReference>
<dbReference type="InterPro" id="IPR000743">
    <property type="entry name" value="Glyco_hydro_28"/>
</dbReference>
<dbReference type="InterPro" id="IPR012334">
    <property type="entry name" value="Pectin_lyas_fold"/>
</dbReference>
<dbReference type="InterPro" id="IPR011050">
    <property type="entry name" value="Pectin_lyase_fold/virulence"/>
</dbReference>
<dbReference type="PANTHER" id="PTHR31736">
    <property type="match status" value="1"/>
</dbReference>
<dbReference type="PANTHER" id="PTHR31736:SF11">
    <property type="entry name" value="EXOPOLYGALACTURONASE C-RELATED"/>
    <property type="match status" value="1"/>
</dbReference>
<dbReference type="Pfam" id="PF00295">
    <property type="entry name" value="Glyco_hydro_28"/>
    <property type="match status" value="1"/>
</dbReference>
<dbReference type="SUPFAM" id="SSF51126">
    <property type="entry name" value="Pectin lyase-like"/>
    <property type="match status" value="1"/>
</dbReference>
<feature type="signal peptide" evidence="2">
    <location>
        <begin position="1"/>
        <end position="21"/>
    </location>
</feature>
<feature type="chain" id="PRO_0000393685" description="Probable exopolygalacturonase C">
    <location>
        <begin position="22"/>
        <end position="440"/>
    </location>
</feature>
<feature type="repeat" description="PbH1 1">
    <location>
        <begin position="188"/>
        <end position="210"/>
    </location>
</feature>
<feature type="repeat" description="PbH1 2">
    <location>
        <begin position="217"/>
        <end position="238"/>
    </location>
</feature>
<feature type="repeat" description="PbH1 3">
    <location>
        <begin position="240"/>
        <end position="261"/>
    </location>
</feature>
<feature type="repeat" description="PbH1 4">
    <location>
        <begin position="272"/>
        <end position="293"/>
    </location>
</feature>
<feature type="active site" description="Proton donor" evidence="1">
    <location>
        <position position="231"/>
    </location>
</feature>
<feature type="active site" evidence="1">
    <location>
        <position position="255"/>
    </location>
</feature>
<feature type="glycosylation site" description="N-linked (GlcNAc...) asparagine" evidence="2">
    <location>
        <position position="84"/>
    </location>
</feature>
<feature type="glycosylation site" description="N-linked (GlcNAc...) asparagine" evidence="2">
    <location>
        <position position="151"/>
    </location>
</feature>
<feature type="glycosylation site" description="N-linked (GlcNAc...) asparagine" evidence="2">
    <location>
        <position position="219"/>
    </location>
</feature>
<feature type="glycosylation site" description="N-linked (GlcNAc...) asparagine" evidence="2">
    <location>
        <position position="271"/>
    </location>
</feature>
<feature type="glycosylation site" description="N-linked (GlcNAc...) asparagine" evidence="2">
    <location>
        <position position="313"/>
    </location>
</feature>
<feature type="glycosylation site" description="N-linked (GlcNAc...) asparagine" evidence="2">
    <location>
        <position position="434"/>
    </location>
</feature>
<feature type="disulfide bond" evidence="1">
    <location>
        <begin position="389"/>
        <end position="395"/>
    </location>
</feature>
<evidence type="ECO:0000250" key="1"/>
<evidence type="ECO:0000255" key="2"/>
<evidence type="ECO:0000305" key="3"/>
<proteinExistence type="inferred from homology"/>